<gene>
    <name evidence="1" type="primary">ruvA</name>
    <name type="ordered locus">SPD_0170</name>
</gene>
<keyword id="KW-0963">Cytoplasm</keyword>
<keyword id="KW-0227">DNA damage</keyword>
<keyword id="KW-0233">DNA recombination</keyword>
<keyword id="KW-0234">DNA repair</keyword>
<keyword id="KW-0238">DNA-binding</keyword>
<keyword id="KW-1185">Reference proteome</keyword>
<evidence type="ECO:0000255" key="1">
    <source>
        <dbReference type="HAMAP-Rule" id="MF_00031"/>
    </source>
</evidence>
<proteinExistence type="inferred from homology"/>
<feature type="chain" id="PRO_1000002566" description="Holliday junction branch migration complex subunit RuvA">
    <location>
        <begin position="1"/>
        <end position="197"/>
    </location>
</feature>
<feature type="region of interest" description="Domain I" evidence="1">
    <location>
        <begin position="1"/>
        <end position="63"/>
    </location>
</feature>
<feature type="region of interest" description="Domain II" evidence="1">
    <location>
        <begin position="64"/>
        <end position="142"/>
    </location>
</feature>
<feature type="region of interest" description="Flexible linker" evidence="1">
    <location>
        <begin position="143"/>
        <end position="147"/>
    </location>
</feature>
<feature type="region of interest" description="Domain III" evidence="1">
    <location>
        <begin position="148"/>
        <end position="197"/>
    </location>
</feature>
<comment type="function">
    <text evidence="1">The RuvA-RuvB-RuvC complex processes Holliday junction (HJ) DNA during genetic recombination and DNA repair, while the RuvA-RuvB complex plays an important role in the rescue of blocked DNA replication forks via replication fork reversal (RFR). RuvA specifically binds to HJ cruciform DNA, conferring on it an open structure. The RuvB hexamer acts as an ATP-dependent pump, pulling dsDNA into and through the RuvAB complex. HJ branch migration allows RuvC to scan DNA until it finds its consensus sequence, where it cleaves and resolves the cruciform DNA.</text>
</comment>
<comment type="subunit">
    <text evidence="1">Homotetramer. Forms an RuvA(8)-RuvB(12)-Holliday junction (HJ) complex. HJ DNA is sandwiched between 2 RuvA tetramers; dsDNA enters through RuvA and exits via RuvB. An RuvB hexamer assembles on each DNA strand where it exits the tetramer. Each RuvB hexamer is contacted by two RuvA subunits (via domain III) on 2 adjacent RuvB subunits; this complex drives branch migration. In the full resolvosome a probable DNA-RuvA(4)-RuvB(12)-RuvC(2) complex forms which resolves the HJ.</text>
</comment>
<comment type="subcellular location">
    <subcellularLocation>
        <location evidence="1">Cytoplasm</location>
    </subcellularLocation>
</comment>
<comment type="domain">
    <text evidence="1">Has three domains with a flexible linker between the domains II and III and assumes an 'L' shape. Domain III is highly mobile and contacts RuvB.</text>
</comment>
<comment type="similarity">
    <text evidence="1">Belongs to the RuvA family.</text>
</comment>
<accession>Q04MQ9</accession>
<organism>
    <name type="scientific">Streptococcus pneumoniae serotype 2 (strain D39 / NCTC 7466)</name>
    <dbReference type="NCBI Taxonomy" id="373153"/>
    <lineage>
        <taxon>Bacteria</taxon>
        <taxon>Bacillati</taxon>
        <taxon>Bacillota</taxon>
        <taxon>Bacilli</taxon>
        <taxon>Lactobacillales</taxon>
        <taxon>Streptococcaceae</taxon>
        <taxon>Streptococcus</taxon>
    </lineage>
</organism>
<name>RUVA_STRP2</name>
<protein>
    <recommendedName>
        <fullName evidence="1">Holliday junction branch migration complex subunit RuvA</fullName>
    </recommendedName>
</protein>
<sequence length="197" mass="21548">MYAYLKGIITKITAKYIVLETNGIGYILHVANPYAYSGQVNQEAQIYVHQVVREDAHLLYGFRSEDEKKLFLSLISVSGIGPVSALAIIAADDNAGLVQAIETKNITYLTKFPKIGKKTAQQMVLDLEGKVVVAGDGLPAKVAVQASAENQELEEAMEAMLALGYKATELKKIKKFFEGTTDTAENYIKSALKMLVK</sequence>
<dbReference type="EMBL" id="CP000410">
    <property type="protein sequence ID" value="ABJ53778.1"/>
    <property type="molecule type" value="Genomic_DNA"/>
</dbReference>
<dbReference type="RefSeq" id="WP_000271489.1">
    <property type="nucleotide sequence ID" value="NZ_JAMLJR010000002.1"/>
</dbReference>
<dbReference type="SMR" id="Q04MQ9"/>
<dbReference type="PaxDb" id="373153-SPD_0170"/>
<dbReference type="KEGG" id="spd:SPD_0170"/>
<dbReference type="eggNOG" id="COG0632">
    <property type="taxonomic scope" value="Bacteria"/>
</dbReference>
<dbReference type="HOGENOM" id="CLU_087936_1_0_9"/>
<dbReference type="BioCyc" id="SPNE373153:G1G6V-189-MONOMER"/>
<dbReference type="Proteomes" id="UP000001452">
    <property type="component" value="Chromosome"/>
</dbReference>
<dbReference type="GO" id="GO:0005737">
    <property type="term" value="C:cytoplasm"/>
    <property type="evidence" value="ECO:0007669"/>
    <property type="project" value="UniProtKB-SubCell"/>
</dbReference>
<dbReference type="GO" id="GO:0009379">
    <property type="term" value="C:Holliday junction helicase complex"/>
    <property type="evidence" value="ECO:0007669"/>
    <property type="project" value="InterPro"/>
</dbReference>
<dbReference type="GO" id="GO:0048476">
    <property type="term" value="C:Holliday junction resolvase complex"/>
    <property type="evidence" value="ECO:0007669"/>
    <property type="project" value="UniProtKB-UniRule"/>
</dbReference>
<dbReference type="GO" id="GO:0005524">
    <property type="term" value="F:ATP binding"/>
    <property type="evidence" value="ECO:0007669"/>
    <property type="project" value="InterPro"/>
</dbReference>
<dbReference type="GO" id="GO:0000400">
    <property type="term" value="F:four-way junction DNA binding"/>
    <property type="evidence" value="ECO:0007669"/>
    <property type="project" value="UniProtKB-UniRule"/>
</dbReference>
<dbReference type="GO" id="GO:0009378">
    <property type="term" value="F:four-way junction helicase activity"/>
    <property type="evidence" value="ECO:0007669"/>
    <property type="project" value="InterPro"/>
</dbReference>
<dbReference type="GO" id="GO:0006310">
    <property type="term" value="P:DNA recombination"/>
    <property type="evidence" value="ECO:0007669"/>
    <property type="project" value="UniProtKB-UniRule"/>
</dbReference>
<dbReference type="GO" id="GO:0006281">
    <property type="term" value="P:DNA repair"/>
    <property type="evidence" value="ECO:0007669"/>
    <property type="project" value="UniProtKB-UniRule"/>
</dbReference>
<dbReference type="CDD" id="cd14332">
    <property type="entry name" value="UBA_RuvA_C"/>
    <property type="match status" value="1"/>
</dbReference>
<dbReference type="Gene3D" id="1.10.150.20">
    <property type="entry name" value="5' to 3' exonuclease, C-terminal subdomain"/>
    <property type="match status" value="1"/>
</dbReference>
<dbReference type="Gene3D" id="1.10.8.10">
    <property type="entry name" value="DNA helicase RuvA subunit, C-terminal domain"/>
    <property type="match status" value="1"/>
</dbReference>
<dbReference type="Gene3D" id="2.40.50.140">
    <property type="entry name" value="Nucleic acid-binding proteins"/>
    <property type="match status" value="1"/>
</dbReference>
<dbReference type="HAMAP" id="MF_00031">
    <property type="entry name" value="DNA_HJ_migration_RuvA"/>
    <property type="match status" value="1"/>
</dbReference>
<dbReference type="InterPro" id="IPR013849">
    <property type="entry name" value="DNA_helicase_Holl-junc_RuvA_I"/>
</dbReference>
<dbReference type="InterPro" id="IPR003583">
    <property type="entry name" value="Hlx-hairpin-Hlx_DNA-bd_motif"/>
</dbReference>
<dbReference type="InterPro" id="IPR012340">
    <property type="entry name" value="NA-bd_OB-fold"/>
</dbReference>
<dbReference type="InterPro" id="IPR000085">
    <property type="entry name" value="RuvA"/>
</dbReference>
<dbReference type="InterPro" id="IPR010994">
    <property type="entry name" value="RuvA_2-like"/>
</dbReference>
<dbReference type="InterPro" id="IPR011114">
    <property type="entry name" value="RuvA_C"/>
</dbReference>
<dbReference type="InterPro" id="IPR036267">
    <property type="entry name" value="RuvA_C_sf"/>
</dbReference>
<dbReference type="NCBIfam" id="TIGR00084">
    <property type="entry name" value="ruvA"/>
    <property type="match status" value="1"/>
</dbReference>
<dbReference type="Pfam" id="PF14520">
    <property type="entry name" value="HHH_5"/>
    <property type="match status" value="1"/>
</dbReference>
<dbReference type="Pfam" id="PF07499">
    <property type="entry name" value="RuvA_C"/>
    <property type="match status" value="1"/>
</dbReference>
<dbReference type="Pfam" id="PF01330">
    <property type="entry name" value="RuvA_N"/>
    <property type="match status" value="1"/>
</dbReference>
<dbReference type="SMART" id="SM00278">
    <property type="entry name" value="HhH1"/>
    <property type="match status" value="2"/>
</dbReference>
<dbReference type="SUPFAM" id="SSF46929">
    <property type="entry name" value="DNA helicase RuvA subunit, C-terminal domain"/>
    <property type="match status" value="1"/>
</dbReference>
<dbReference type="SUPFAM" id="SSF50249">
    <property type="entry name" value="Nucleic acid-binding proteins"/>
    <property type="match status" value="1"/>
</dbReference>
<dbReference type="SUPFAM" id="SSF47781">
    <property type="entry name" value="RuvA domain 2-like"/>
    <property type="match status" value="1"/>
</dbReference>
<reference key="1">
    <citation type="journal article" date="2007" name="J. Bacteriol.">
        <title>Genome sequence of Avery's virulent serotype 2 strain D39 of Streptococcus pneumoniae and comparison with that of unencapsulated laboratory strain R6.</title>
        <authorList>
            <person name="Lanie J.A."/>
            <person name="Ng W.-L."/>
            <person name="Kazmierczak K.M."/>
            <person name="Andrzejewski T.M."/>
            <person name="Davidsen T.M."/>
            <person name="Wayne K.J."/>
            <person name="Tettelin H."/>
            <person name="Glass J.I."/>
            <person name="Winkler M.E."/>
        </authorList>
    </citation>
    <scope>NUCLEOTIDE SEQUENCE [LARGE SCALE GENOMIC DNA]</scope>
    <source>
        <strain>D39 / NCTC 7466</strain>
    </source>
</reference>